<feature type="signal peptide">
    <location>
        <begin position="1"/>
        <end position="18"/>
    </location>
</feature>
<feature type="peptide" id="PRO_0000009086" description="Fibrinopeptide B">
    <location>
        <begin position="19"/>
        <end position="32"/>
    </location>
</feature>
<feature type="chain" id="PRO_0000009085" description="Fibrinogen beta chain">
    <location>
        <begin position="33"/>
        <end position="479"/>
    </location>
</feature>
<feature type="domain" description="Fibrinogen C-terminal" evidence="5">
    <location>
        <begin position="220"/>
        <end position="476"/>
    </location>
</feature>
<feature type="region of interest" description="Disordered" evidence="6">
    <location>
        <begin position="20"/>
        <end position="82"/>
    </location>
</feature>
<feature type="region of interest" description="Beta-chain polymerization, binding distal domain of another fibrin" evidence="1">
    <location>
        <begin position="33"/>
        <end position="35"/>
    </location>
</feature>
<feature type="compositionally biased region" description="Basic and acidic residues" evidence="6">
    <location>
        <begin position="35"/>
        <end position="45"/>
    </location>
</feature>
<feature type="compositionally biased region" description="Basic and acidic residues" evidence="6">
    <location>
        <begin position="64"/>
        <end position="78"/>
    </location>
</feature>
<feature type="site" description="Cleavage; by thrombin; to release fibrinopeptide B" evidence="1">
    <location>
        <begin position="32"/>
        <end position="33"/>
    </location>
</feature>
<feature type="glycosylation site" description="N-linked (GlcNAc...) asparagine" evidence="4">
    <location>
        <position position="382"/>
    </location>
</feature>
<feature type="disulfide bond" description="Interchain (with alpha chain)" evidence="5">
    <location>
        <position position="211"/>
    </location>
</feature>
<feature type="disulfide bond" description="Interchain (with gamma chain)" evidence="5">
    <location>
        <position position="215"/>
    </location>
</feature>
<feature type="disulfide bond" evidence="5">
    <location>
        <begin position="219"/>
        <end position="304"/>
    </location>
</feature>
<feature type="disulfide bond" evidence="5">
    <location>
        <begin position="229"/>
        <end position="258"/>
    </location>
</feature>
<feature type="disulfide bond" evidence="5">
    <location>
        <begin position="412"/>
        <end position="425"/>
    </location>
</feature>
<feature type="splice variant" id="VSP_022492" description="In isoform 2." evidence="7">
    <original>MRHLWLLLLSVSLVQTQAATTDSDKV</original>
    <variation>MSVPTRDTVITIHELVPNSSNSKRK</variation>
    <location>
        <begin position="1"/>
        <end position="26"/>
    </location>
</feature>
<feature type="splice variant" id="VSP_022493" description="In isoform 2." evidence="7">
    <original>YSMRRMSMKIRPVFPQQ</original>
    <variation>TPRQHLLLQRVPPQGSSVVMATCLHGTKCPESQLLDVHLNED</variation>
    <location>
        <begin position="463"/>
        <end position="479"/>
    </location>
</feature>
<feature type="sequence conflict" description="In Ref. 5; AA sequence." evidence="8" ref="5">
    <original>LSI</original>
    <variation>ILS</variation>
    <location>
        <begin position="28"/>
        <end position="30"/>
    </location>
</feature>
<feature type="sequence conflict" description="In Ref. 1; AAA64866." evidence="8" ref="1">
    <original>P</original>
    <variation>A</variation>
    <location>
        <position position="95"/>
    </location>
</feature>
<feature type="sequence conflict" description="In Ref. 1; AAA64866." evidence="8" ref="1">
    <original>S</original>
    <variation>Y</variation>
    <location>
        <position position="126"/>
    </location>
</feature>
<feature type="sequence conflict" description="In Ref. 1; AAA64866 and 6; AAA41160." evidence="8" ref="1 6">
    <original>I</original>
    <variation>M</variation>
    <location>
        <position position="197"/>
    </location>
</feature>
<feature type="sequence conflict" description="In Ref. 8; AAA41159." evidence="8" ref="8">
    <original>L</original>
    <variation>Q</variation>
    <location>
        <position position="439"/>
    </location>
</feature>
<feature type="sequence conflict" description="In Ref. 8; AAA41159." evidence="8" ref="8">
    <original>S</original>
    <variation>T</variation>
    <location>
        <position position="441"/>
    </location>
</feature>
<feature type="sequence conflict" description="In Ref. 8; AAA41159." evidence="8" ref="8">
    <original>S</original>
    <variation>A</variation>
    <location>
        <position position="445"/>
    </location>
</feature>
<feature type="sequence conflict" description="In Ref. 8; AAA41159." evidence="8" ref="8">
    <original>R</original>
    <variation>K</variation>
    <location>
        <position position="467"/>
    </location>
</feature>
<feature type="sequence conflict" description="In Ref. 8; AAA41159." evidence="8" ref="8">
    <original>V</original>
    <variation>F</variation>
    <location>
        <position position="475"/>
    </location>
</feature>
<proteinExistence type="evidence at protein level"/>
<keyword id="KW-1064">Adaptive immunity</keyword>
<keyword id="KW-0025">Alternative splicing</keyword>
<keyword id="KW-0094">Blood coagulation</keyword>
<keyword id="KW-0175">Coiled coil</keyword>
<keyword id="KW-0903">Direct protein sequencing</keyword>
<keyword id="KW-1015">Disulfide bond</keyword>
<keyword id="KW-0325">Glycoprotein</keyword>
<keyword id="KW-0356">Hemostasis</keyword>
<keyword id="KW-0391">Immunity</keyword>
<keyword id="KW-0399">Innate immunity</keyword>
<keyword id="KW-1185">Reference proteome</keyword>
<keyword id="KW-0964">Secreted</keyword>
<keyword id="KW-0732">Signal</keyword>
<sequence>MRHLWLLLLSVSLVQTQAATTDSDKVDLSIARGHRPVDRRKEEPPSLRPAPPPISGGGYRARPAKVDAGQKKVERKPPDAGGCVHGDGDMGVLCPTGCELRQTLLNHERPIKNSIAELNSNINSVSETSSVTFQYLTLLKDMWKKKQAQVKDNENVINEYSSILEDQKLYIDETVNDNIPLNLRVLRSILEDLRSKIQKLESDISAQTEYCHTPCTVNCNIPVVSGKECEEIIRKGGETSEMYLIQPDTSSKPYRVYCDMKTENGGWTVIQNRQDGSVDFGRKWDPYKKGFGNIATNEDTKKYCGLPGEYWLGNDKISQLTRIGPTELLIEMEDWKGDKVKAHYGGFTVQTEANKYQVSVNKYKGTAGNALMEGASQLVGENRTMTIHNGMFFSTYDRDNDGWVTTDPRKQCSKEDGGGWWYNRCHAANPNGRYYWGGLYSWDMSKHGTDDGVVWMNWKGSWYSMRRMSMKIRPVFPQQ</sequence>
<gene>
    <name type="primary">Fgb</name>
    <name type="ORF">Ab1-181</name>
    <name type="ORF">Ab1-216</name>
    <name type="ORF">Ac1-581</name>
</gene>
<reference key="1">
    <citation type="journal article" date="1994" name="Blood Coagul. Fibrinolysis">
        <title>Cloning of the complete coding sequence of rat fibrinogen B beta chain cDNA: interspecies conservation of fibrin beta 15-42 primary structure.</title>
        <authorList>
            <person name="Courtney M.A."/>
            <person name="Bunce L.A."/>
            <person name="Neroni L.A."/>
            <person name="Simpson-Haidaris P.J."/>
        </authorList>
    </citation>
    <scope>NUCLEOTIDE SEQUENCE [MRNA] (ISOFORM 1)</scope>
    <source>
        <strain>Sprague-Dawley</strain>
        <tissue>Liver</tissue>
    </source>
</reference>
<reference key="2">
    <citation type="submission" date="2003-06" db="EMBL/GenBank/DDBJ databases">
        <title>Liver regeneration after PH.</title>
        <authorList>
            <person name="Xu C.S."/>
            <person name="Li W.Q."/>
            <person name="Li Y.C."/>
            <person name="Chang C.F."/>
            <person name="Chai L.Q."/>
            <person name="Yuan J.Y."/>
            <person name="Yang K.J."/>
            <person name="Yan H.M."/>
            <person name="Zhao L.F."/>
            <person name="Ma H."/>
            <person name="Wang L."/>
            <person name="Wang S.F."/>
            <person name="Han H.P."/>
            <person name="Wang G.P."/>
            <person name="Shi J.B."/>
            <person name="Rahman S."/>
            <person name="Wang Q.N."/>
            <person name="Zhang J.B."/>
        </authorList>
    </citation>
    <scope>NUCLEOTIDE SEQUENCE [LARGE SCALE MRNA] (ISOFORM 2)</scope>
</reference>
<reference key="3">
    <citation type="journal article" date="2004" name="Genome Res.">
        <title>The status, quality, and expansion of the NIH full-length cDNA project: the Mammalian Gene Collection (MGC).</title>
        <authorList>
            <consortium name="The MGC Project Team"/>
        </authorList>
    </citation>
    <scope>NUCLEOTIDE SEQUENCE [LARGE SCALE MRNA] (ISOFORM 1)</scope>
    <source>
        <tissue>Liver</tissue>
    </source>
</reference>
<reference key="4">
    <citation type="journal article" date="1984" name="Proc. Natl. Acad. Sci. U.S.A.">
        <title>Potential basis for regulation of the coordinately expressed fibrinogen genes: homology in the 5' flanking regions.</title>
        <authorList>
            <person name="Fowlkes D.M."/>
            <person name="Mullis N.T."/>
            <person name="Comeau C.M."/>
            <person name="Crabtree G.R."/>
        </authorList>
    </citation>
    <scope>NUCLEOTIDE SEQUENCE [GENOMIC DNA] OF 1-26</scope>
</reference>
<reference key="5">
    <citation type="journal article" date="1965" name="Acta Chem. Scand.">
        <title>Studies on fibrinopeptides from mammals.</title>
        <authorList>
            <person name="Blombaeck B."/>
            <person name="Blombaeck M."/>
            <person name="Grondahl N.J."/>
        </authorList>
    </citation>
    <scope>PROTEIN SEQUENCE OF 19-32 (ISOFORM 1)</scope>
</reference>
<reference key="6">
    <citation type="journal article" date="1989" name="Gene">
        <title>Cloning and characterization of a cDNA for the B beta chain of rat fibrinogen: evolutionary conservation of translated and 3'-untranslated sequences.</title>
        <authorList>
            <person name="Eastman E.M."/>
            <person name="Gilula N.B."/>
        </authorList>
    </citation>
    <scope>NUCLEOTIDE SEQUENCE [MRNA] OF 183-479 (ISOFORMS 1/2)</scope>
</reference>
<reference key="7">
    <citation type="submission" date="2006-12" db="UniProtKB">
        <authorList>
            <person name="Lubec G."/>
            <person name="Afjehi-Sadat L."/>
        </authorList>
    </citation>
    <scope>PROTEIN SEQUENCE OF 151-167; 235-255 AND 415-424 (ISOFORMS 1/2)</scope>
    <scope>IDENTIFICATION BY MASS SPECTROMETRY</scope>
    <source>
        <strain>Sprague-Dawley</strain>
        <tissue>Spinal cord</tissue>
    </source>
</reference>
<reference key="8">
    <citation type="journal article" date="1987" name="Exp. Cell Res.">
        <title>Molecular cloning of mRNA sequences transiently induced during rat liver regeneration.</title>
        <authorList>
            <person name="Sobczak J."/>
            <person name="Lotti A.-M."/>
            <person name="Taroux P."/>
            <person name="Duguet M."/>
        </authorList>
    </citation>
    <scope>NUCLEOTIDE SEQUENCE [MRNA] OF 425-479 (ISOFORM 1)</scope>
    <source>
        <strain>Wistar</strain>
        <tissue>Liver</tissue>
    </source>
</reference>
<comment type="function">
    <text evidence="2">Cleaved by the protease thrombin to yield monomers which, together with fibrinogen alpha (FGA) and fibrinogen gamma (FGG), polymerize to form an insoluble fibrin matrix. Fibrin has a major function in hemostasis as one of the primary components of blood clots. In addition, functions during the early stages of wound repair to stabilize the lesion and guide cell migration during re-epithelialization. Was originally thought to be essential for platelet aggregation, based on in vitro studies using anticoagulated blood. However subsequent studies have shown that it is not absolutely required for thrombus formation in vivo. Enhances expression of SELP in activated platelets. Maternal fibrinogen is essential for successful pregnancy. Fibrin deposition is also associated with infection, where it protects against IFNG-mediated hemorrhage. May also facilitate the antibacterial immune response via both innate and T-cell mediated pathways.</text>
</comment>
<comment type="subunit">
    <text evidence="3">Heterohexamer; disulfide linked. Contains 2 sets of 3 non-identical chains (alpha, beta and gamma). The 2 heterotrimers are in head to head conformation with the N-termini in a small central domain (By similarity).</text>
</comment>
<comment type="subcellular location">
    <subcellularLocation>
        <location>Secreted</location>
    </subcellularLocation>
</comment>
<comment type="alternative products">
    <event type="alternative splicing"/>
    <isoform>
        <id>P14480-1</id>
        <name>1</name>
        <sequence type="displayed"/>
    </isoform>
    <isoform>
        <id>P14480-2</id>
        <name>2</name>
        <sequence type="described" ref="VSP_022492 VSP_022493"/>
    </isoform>
</comment>
<comment type="domain">
    <text evidence="3">A long coiled coil structure formed by 3 polypeptide chains connects the central nodule to the C-terminal domains (distal nodules). The long C-terminal ends of the alpha chains fold back, contributing a fourth strand to the coiled coil structure.</text>
</comment>
<comment type="PTM">
    <text>Conversion of fibrinogen to fibrin is triggered by thrombin, which cleaves fibrinopeptides A and B from alpha and beta chains, and thus exposes the N-terminal polymerization sites responsible for the formation of the soft clot.</text>
</comment>
<accession>P14480</accession>
<accession>Q5I0P7</accession>
<accession>Q7TME5</accession>
<protein>
    <recommendedName>
        <fullName>Fibrinogen beta chain</fullName>
    </recommendedName>
    <alternativeName>
        <fullName>Liver regeneration-related protein LRRG036/LRRG043/LRRG189</fullName>
    </alternativeName>
    <component>
        <recommendedName>
            <fullName>Fibrinopeptide B</fullName>
        </recommendedName>
    </component>
    <component>
        <recommendedName>
            <fullName>Fibrinogen beta chain</fullName>
        </recommendedName>
    </component>
</protein>
<name>FIBB_RAT</name>
<organism>
    <name type="scientific">Rattus norvegicus</name>
    <name type="common">Rat</name>
    <dbReference type="NCBI Taxonomy" id="10116"/>
    <lineage>
        <taxon>Eukaryota</taxon>
        <taxon>Metazoa</taxon>
        <taxon>Chordata</taxon>
        <taxon>Craniata</taxon>
        <taxon>Vertebrata</taxon>
        <taxon>Euteleostomi</taxon>
        <taxon>Mammalia</taxon>
        <taxon>Eutheria</taxon>
        <taxon>Euarchontoglires</taxon>
        <taxon>Glires</taxon>
        <taxon>Rodentia</taxon>
        <taxon>Myomorpha</taxon>
        <taxon>Muroidea</taxon>
        <taxon>Muridae</taxon>
        <taxon>Murinae</taxon>
        <taxon>Rattus</taxon>
    </lineage>
</organism>
<evidence type="ECO:0000250" key="1"/>
<evidence type="ECO:0000250" key="2">
    <source>
        <dbReference type="UniProtKB" id="E9PV24"/>
    </source>
</evidence>
<evidence type="ECO:0000250" key="3">
    <source>
        <dbReference type="UniProtKB" id="P02675"/>
    </source>
</evidence>
<evidence type="ECO:0000255" key="4"/>
<evidence type="ECO:0000255" key="5">
    <source>
        <dbReference type="PROSITE-ProRule" id="PRU00739"/>
    </source>
</evidence>
<evidence type="ECO:0000256" key="6">
    <source>
        <dbReference type="SAM" id="MobiDB-lite"/>
    </source>
</evidence>
<evidence type="ECO:0000303" key="7">
    <source ref="2"/>
</evidence>
<evidence type="ECO:0000305" key="8"/>
<dbReference type="EMBL" id="U05675">
    <property type="protein sequence ID" value="AAA64866.1"/>
    <property type="molecule type" value="mRNA"/>
</dbReference>
<dbReference type="EMBL" id="AY321323">
    <property type="protein sequence ID" value="AAP86255.1"/>
    <property type="molecule type" value="mRNA"/>
</dbReference>
<dbReference type="EMBL" id="AY325147">
    <property type="protein sequence ID" value="AAP92548.1"/>
    <property type="molecule type" value="mRNA"/>
</dbReference>
<dbReference type="EMBL" id="AY325153">
    <property type="protein sequence ID" value="AAP92554.1"/>
    <property type="molecule type" value="mRNA"/>
</dbReference>
<dbReference type="EMBL" id="BC088102">
    <property type="protein sequence ID" value="AAH88102.1"/>
    <property type="molecule type" value="mRNA"/>
</dbReference>
<dbReference type="EMBL" id="K01336">
    <property type="protein sequence ID" value="AAA98625.1"/>
    <property type="molecule type" value="Genomic_DNA"/>
</dbReference>
<dbReference type="EMBL" id="M27220">
    <property type="protein sequence ID" value="AAA41160.1"/>
    <property type="molecule type" value="mRNA"/>
</dbReference>
<dbReference type="EMBL" id="M35602">
    <property type="protein sequence ID" value="AAA41159.1"/>
    <property type="molecule type" value="mRNA"/>
</dbReference>
<dbReference type="PIR" id="A05299">
    <property type="entry name" value="A05299"/>
</dbReference>
<dbReference type="PIR" id="I67595">
    <property type="entry name" value="I67595"/>
</dbReference>
<dbReference type="RefSeq" id="NP_064456.2">
    <molecule id="P14480-1"/>
    <property type="nucleotide sequence ID" value="NM_020071.2"/>
</dbReference>
<dbReference type="SMR" id="P14480"/>
<dbReference type="FunCoup" id="P14480">
    <property type="interactions" value="74"/>
</dbReference>
<dbReference type="IntAct" id="P14480">
    <property type="interactions" value="2"/>
</dbReference>
<dbReference type="STRING" id="10116.ENSRNOP00000009813"/>
<dbReference type="GlyCosmos" id="P14480">
    <property type="glycosylation" value="1 site, No reported glycans"/>
</dbReference>
<dbReference type="GlyGen" id="P14480">
    <property type="glycosylation" value="2 sites, 1 O-linked glycan (1 site)"/>
</dbReference>
<dbReference type="iPTMnet" id="P14480"/>
<dbReference type="PhosphoSitePlus" id="P14480"/>
<dbReference type="PaxDb" id="10116-ENSRNOP00000050663"/>
<dbReference type="Ensembl" id="ENSRNOT00000040708.5">
    <molecule id="P14480-2"/>
    <property type="protein sequence ID" value="ENSRNOP00000050663.1"/>
    <property type="gene ID" value="ENSRNOG00000007092.8"/>
</dbReference>
<dbReference type="GeneID" id="24366"/>
<dbReference type="KEGG" id="rno:24366"/>
<dbReference type="UCSC" id="RGD:2604">
    <molecule id="P14480-1"/>
    <property type="organism name" value="rat"/>
</dbReference>
<dbReference type="AGR" id="RGD:2604"/>
<dbReference type="CTD" id="2244"/>
<dbReference type="RGD" id="2604">
    <property type="gene designation" value="Fgb"/>
</dbReference>
<dbReference type="VEuPathDB" id="HostDB:ENSRNOG00000007092"/>
<dbReference type="eggNOG" id="KOG2579">
    <property type="taxonomic scope" value="Eukaryota"/>
</dbReference>
<dbReference type="GeneTree" id="ENSGT00940000158122"/>
<dbReference type="HOGENOM" id="CLU_038628_13_0_1"/>
<dbReference type="InParanoid" id="P14480"/>
<dbReference type="OMA" id="GCIHADP"/>
<dbReference type="TreeFam" id="TF336658"/>
<dbReference type="Reactome" id="R-RNO-114608">
    <property type="pathway name" value="Platelet degranulation"/>
</dbReference>
<dbReference type="Reactome" id="R-RNO-140875">
    <property type="pathway name" value="Common Pathway of Fibrin Clot Formation"/>
</dbReference>
<dbReference type="Reactome" id="R-RNO-216083">
    <property type="pathway name" value="Integrin cell surface interactions"/>
</dbReference>
<dbReference type="Reactome" id="R-RNO-354192">
    <property type="pathway name" value="Integrin signaling"/>
</dbReference>
<dbReference type="Reactome" id="R-RNO-354194">
    <property type="pathway name" value="GRB2:SOS provides linkage to MAPK signaling for Integrins"/>
</dbReference>
<dbReference type="Reactome" id="R-RNO-372708">
    <property type="pathway name" value="p130Cas linkage to MAPK signaling for integrins"/>
</dbReference>
<dbReference type="Reactome" id="R-RNO-5674135">
    <property type="pathway name" value="MAP2K and MAPK activation"/>
</dbReference>
<dbReference type="Reactome" id="R-RNO-5686938">
    <property type="pathway name" value="Regulation of TLR by endogenous ligand"/>
</dbReference>
<dbReference type="PRO" id="PR:P14480"/>
<dbReference type="Proteomes" id="UP000002494">
    <property type="component" value="Chromosome 2"/>
</dbReference>
<dbReference type="Bgee" id="ENSRNOG00000007092">
    <property type="expression patterns" value="Expressed in liver and 17 other cell types or tissues"/>
</dbReference>
<dbReference type="GO" id="GO:0072562">
    <property type="term" value="C:blood microparticle"/>
    <property type="evidence" value="ECO:0000314"/>
    <property type="project" value="RGD"/>
</dbReference>
<dbReference type="GO" id="GO:0005938">
    <property type="term" value="C:cell cortex"/>
    <property type="evidence" value="ECO:0000266"/>
    <property type="project" value="RGD"/>
</dbReference>
<dbReference type="GO" id="GO:0009986">
    <property type="term" value="C:cell surface"/>
    <property type="evidence" value="ECO:0000266"/>
    <property type="project" value="RGD"/>
</dbReference>
<dbReference type="GO" id="GO:0062023">
    <property type="term" value="C:collagen-containing extracellular matrix"/>
    <property type="evidence" value="ECO:0000318"/>
    <property type="project" value="GO_Central"/>
</dbReference>
<dbReference type="GO" id="GO:0005783">
    <property type="term" value="C:endoplasmic reticulum"/>
    <property type="evidence" value="ECO:0007669"/>
    <property type="project" value="Ensembl"/>
</dbReference>
<dbReference type="GO" id="GO:0009897">
    <property type="term" value="C:external side of plasma membrane"/>
    <property type="evidence" value="ECO:0000266"/>
    <property type="project" value="RGD"/>
</dbReference>
<dbReference type="GO" id="GO:0005615">
    <property type="term" value="C:extracellular space"/>
    <property type="evidence" value="ECO:0000266"/>
    <property type="project" value="RGD"/>
</dbReference>
<dbReference type="GO" id="GO:0005577">
    <property type="term" value="C:fibrinogen complex"/>
    <property type="evidence" value="ECO:0000266"/>
    <property type="project" value="RGD"/>
</dbReference>
<dbReference type="GO" id="GO:0031091">
    <property type="term" value="C:platelet alpha granule"/>
    <property type="evidence" value="ECO:0000266"/>
    <property type="project" value="RGD"/>
</dbReference>
<dbReference type="GO" id="GO:0045202">
    <property type="term" value="C:synapse"/>
    <property type="evidence" value="ECO:0000266"/>
    <property type="project" value="RGD"/>
</dbReference>
<dbReference type="GO" id="GO:0050839">
    <property type="term" value="F:cell adhesion molecule binding"/>
    <property type="evidence" value="ECO:0007669"/>
    <property type="project" value="Ensembl"/>
</dbReference>
<dbReference type="GO" id="GO:0051087">
    <property type="term" value="F:protein-folding chaperone binding"/>
    <property type="evidence" value="ECO:0000266"/>
    <property type="project" value="RGD"/>
</dbReference>
<dbReference type="GO" id="GO:0005102">
    <property type="term" value="F:signaling receptor binding"/>
    <property type="evidence" value="ECO:0007669"/>
    <property type="project" value="Ensembl"/>
</dbReference>
<dbReference type="GO" id="GO:0005198">
    <property type="term" value="F:structural molecule activity"/>
    <property type="evidence" value="ECO:0000266"/>
    <property type="project" value="RGD"/>
</dbReference>
<dbReference type="GO" id="GO:0002250">
    <property type="term" value="P:adaptive immune response"/>
    <property type="evidence" value="ECO:0007669"/>
    <property type="project" value="UniProtKB-KW"/>
</dbReference>
<dbReference type="GO" id="GO:0072378">
    <property type="term" value="P:blood coagulation, fibrin clot formation"/>
    <property type="evidence" value="ECO:0000266"/>
    <property type="project" value="RGD"/>
</dbReference>
<dbReference type="GO" id="GO:0007160">
    <property type="term" value="P:cell-matrix adhesion"/>
    <property type="evidence" value="ECO:0000266"/>
    <property type="project" value="RGD"/>
</dbReference>
<dbReference type="GO" id="GO:0071347">
    <property type="term" value="P:cellular response to interleukin-1"/>
    <property type="evidence" value="ECO:0000270"/>
    <property type="project" value="RGD"/>
</dbReference>
<dbReference type="GO" id="GO:0044320">
    <property type="term" value="P:cellular response to leptin stimulus"/>
    <property type="evidence" value="ECO:0000270"/>
    <property type="project" value="RGD"/>
</dbReference>
<dbReference type="GO" id="GO:0042730">
    <property type="term" value="P:fibrinolysis"/>
    <property type="evidence" value="ECO:0000266"/>
    <property type="project" value="RGD"/>
</dbReference>
<dbReference type="GO" id="GO:0043152">
    <property type="term" value="P:induction of bacterial agglutination"/>
    <property type="evidence" value="ECO:0000266"/>
    <property type="project" value="RGD"/>
</dbReference>
<dbReference type="GO" id="GO:0045087">
    <property type="term" value="P:innate immune response"/>
    <property type="evidence" value="ECO:0007669"/>
    <property type="project" value="UniProtKB-KW"/>
</dbReference>
<dbReference type="GO" id="GO:2000352">
    <property type="term" value="P:negative regulation of endothelial cell apoptotic process"/>
    <property type="evidence" value="ECO:0000266"/>
    <property type="project" value="RGD"/>
</dbReference>
<dbReference type="GO" id="GO:1902042">
    <property type="term" value="P:negative regulation of extrinsic apoptotic signaling pathway via death domain receptors"/>
    <property type="evidence" value="ECO:0000266"/>
    <property type="project" value="RGD"/>
</dbReference>
<dbReference type="GO" id="GO:0031639">
    <property type="term" value="P:plasminogen activation"/>
    <property type="evidence" value="ECO:0000266"/>
    <property type="project" value="RGD"/>
</dbReference>
<dbReference type="GO" id="GO:0070527">
    <property type="term" value="P:platelet aggregation"/>
    <property type="evidence" value="ECO:0000266"/>
    <property type="project" value="RGD"/>
</dbReference>
<dbReference type="GO" id="GO:0070374">
    <property type="term" value="P:positive regulation of ERK1 and ERK2 cascade"/>
    <property type="evidence" value="ECO:0000266"/>
    <property type="project" value="RGD"/>
</dbReference>
<dbReference type="GO" id="GO:0045921">
    <property type="term" value="P:positive regulation of exocytosis"/>
    <property type="evidence" value="ECO:0000266"/>
    <property type="project" value="RGD"/>
</dbReference>
<dbReference type="GO" id="GO:0034116">
    <property type="term" value="P:positive regulation of heterotypic cell-cell adhesion"/>
    <property type="evidence" value="ECO:0000266"/>
    <property type="project" value="RGD"/>
</dbReference>
<dbReference type="GO" id="GO:0090277">
    <property type="term" value="P:positive regulation of peptide hormone secretion"/>
    <property type="evidence" value="ECO:0000266"/>
    <property type="project" value="RGD"/>
</dbReference>
<dbReference type="GO" id="GO:0050714">
    <property type="term" value="P:positive regulation of protein secretion"/>
    <property type="evidence" value="ECO:0000266"/>
    <property type="project" value="RGD"/>
</dbReference>
<dbReference type="GO" id="GO:0045907">
    <property type="term" value="P:positive regulation of vasoconstriction"/>
    <property type="evidence" value="ECO:0000266"/>
    <property type="project" value="RGD"/>
</dbReference>
<dbReference type="GO" id="GO:0051258">
    <property type="term" value="P:protein polymerization"/>
    <property type="evidence" value="ECO:0000266"/>
    <property type="project" value="RGD"/>
</dbReference>
<dbReference type="GO" id="GO:0065003">
    <property type="term" value="P:protein-containing complex assembly"/>
    <property type="evidence" value="ECO:0000266"/>
    <property type="project" value="RGD"/>
</dbReference>
<dbReference type="GO" id="GO:0051592">
    <property type="term" value="P:response to calcium ion"/>
    <property type="evidence" value="ECO:0000266"/>
    <property type="project" value="RGD"/>
</dbReference>
<dbReference type="CDD" id="cd00087">
    <property type="entry name" value="FReD"/>
    <property type="match status" value="1"/>
</dbReference>
<dbReference type="FunFam" id="1.20.5.50:FF:000004">
    <property type="entry name" value="Fibrinogen beta chain"/>
    <property type="match status" value="1"/>
</dbReference>
<dbReference type="FunFam" id="3.90.215.10:FF:000006">
    <property type="entry name" value="Fibrinogen beta chain"/>
    <property type="match status" value="1"/>
</dbReference>
<dbReference type="FunFam" id="4.10.530.10:FF:000004">
    <property type="entry name" value="Fibrinogen beta chain"/>
    <property type="match status" value="1"/>
</dbReference>
<dbReference type="Gene3D" id="1.20.5.50">
    <property type="match status" value="2"/>
</dbReference>
<dbReference type="Gene3D" id="3.90.215.10">
    <property type="entry name" value="Gamma Fibrinogen, chain A, domain 1"/>
    <property type="match status" value="1"/>
</dbReference>
<dbReference type="InterPro" id="IPR037579">
    <property type="entry name" value="FIB_ANG-like"/>
</dbReference>
<dbReference type="InterPro" id="IPR036056">
    <property type="entry name" value="Fibrinogen-like_C"/>
</dbReference>
<dbReference type="InterPro" id="IPR014716">
    <property type="entry name" value="Fibrinogen_a/b/g_C_1"/>
</dbReference>
<dbReference type="InterPro" id="IPR002181">
    <property type="entry name" value="Fibrinogen_a/b/g_C_dom"/>
</dbReference>
<dbReference type="InterPro" id="IPR012290">
    <property type="entry name" value="Fibrinogen_a/b/g_coil_dom"/>
</dbReference>
<dbReference type="InterPro" id="IPR020837">
    <property type="entry name" value="Fibrinogen_CS"/>
</dbReference>
<dbReference type="NCBIfam" id="NF040941">
    <property type="entry name" value="GGGWT_bact"/>
    <property type="match status" value="1"/>
</dbReference>
<dbReference type="PANTHER" id="PTHR47221">
    <property type="entry name" value="FIBRINOGEN ALPHA CHAIN"/>
    <property type="match status" value="1"/>
</dbReference>
<dbReference type="PANTHER" id="PTHR47221:SF6">
    <property type="entry name" value="FIBRINOGEN ALPHA CHAIN"/>
    <property type="match status" value="1"/>
</dbReference>
<dbReference type="Pfam" id="PF08702">
    <property type="entry name" value="Fib_alpha"/>
    <property type="match status" value="1"/>
</dbReference>
<dbReference type="Pfam" id="PF00147">
    <property type="entry name" value="Fibrinogen_C"/>
    <property type="match status" value="1"/>
</dbReference>
<dbReference type="SMART" id="SM00186">
    <property type="entry name" value="FBG"/>
    <property type="match status" value="1"/>
</dbReference>
<dbReference type="SMART" id="SM01212">
    <property type="entry name" value="Fib_alpha"/>
    <property type="match status" value="1"/>
</dbReference>
<dbReference type="SUPFAM" id="SSF56496">
    <property type="entry name" value="Fibrinogen C-terminal domain-like"/>
    <property type="match status" value="1"/>
</dbReference>
<dbReference type="SUPFAM" id="SSF58010">
    <property type="entry name" value="Fibrinogen coiled-coil and central regions"/>
    <property type="match status" value="1"/>
</dbReference>
<dbReference type="PROSITE" id="PS00514">
    <property type="entry name" value="FIBRINOGEN_C_1"/>
    <property type="match status" value="1"/>
</dbReference>
<dbReference type="PROSITE" id="PS51406">
    <property type="entry name" value="FIBRINOGEN_C_2"/>
    <property type="match status" value="1"/>
</dbReference>